<accession>Q2JFF3</accession>
<organism>
    <name type="scientific">Frankia casuarinae (strain DSM 45818 / CECT 9043 / HFP020203 / CcI3)</name>
    <dbReference type="NCBI Taxonomy" id="106370"/>
    <lineage>
        <taxon>Bacteria</taxon>
        <taxon>Bacillati</taxon>
        <taxon>Actinomycetota</taxon>
        <taxon>Actinomycetes</taxon>
        <taxon>Frankiales</taxon>
        <taxon>Frankiaceae</taxon>
        <taxon>Frankia</taxon>
    </lineage>
</organism>
<comment type="function">
    <text evidence="1">One of the essential components for the initiation of protein synthesis. Stabilizes the binding of IF-2 and IF-3 on the 30S subunit to which N-formylmethionyl-tRNA(fMet) subsequently binds. Helps modulate mRNA selection, yielding the 30S pre-initiation complex (PIC). Upon addition of the 50S ribosomal subunit IF-1, IF-2 and IF-3 are released leaving the mature 70S translation initiation complex.</text>
</comment>
<comment type="subunit">
    <text evidence="1">Component of the 30S ribosomal translation pre-initiation complex which assembles on the 30S ribosome in the order IF-2 and IF-3, IF-1 and N-formylmethionyl-tRNA(fMet); mRNA recruitment can occur at any time during PIC assembly.</text>
</comment>
<comment type="subcellular location">
    <subcellularLocation>
        <location evidence="1">Cytoplasm</location>
    </subcellularLocation>
</comment>
<comment type="similarity">
    <text evidence="1">Belongs to the IF-1 family.</text>
</comment>
<dbReference type="EMBL" id="CP000249">
    <property type="protein sequence ID" value="ABD09989.1"/>
    <property type="molecule type" value="Genomic_DNA"/>
</dbReference>
<dbReference type="RefSeq" id="WP_006541558.1">
    <property type="nucleotide sequence ID" value="NZ_MSEA01000047.1"/>
</dbReference>
<dbReference type="SMR" id="Q2JFF3"/>
<dbReference type="STRING" id="106370.Francci3_0605"/>
<dbReference type="KEGG" id="fra:Francci3_0605"/>
<dbReference type="eggNOG" id="COG0361">
    <property type="taxonomic scope" value="Bacteria"/>
</dbReference>
<dbReference type="HOGENOM" id="CLU_151267_1_0_11"/>
<dbReference type="OrthoDB" id="9803250at2"/>
<dbReference type="PhylomeDB" id="Q2JFF3"/>
<dbReference type="Proteomes" id="UP000001937">
    <property type="component" value="Chromosome"/>
</dbReference>
<dbReference type="GO" id="GO:0005829">
    <property type="term" value="C:cytosol"/>
    <property type="evidence" value="ECO:0007669"/>
    <property type="project" value="TreeGrafter"/>
</dbReference>
<dbReference type="GO" id="GO:0043022">
    <property type="term" value="F:ribosome binding"/>
    <property type="evidence" value="ECO:0007669"/>
    <property type="project" value="UniProtKB-UniRule"/>
</dbReference>
<dbReference type="GO" id="GO:0019843">
    <property type="term" value="F:rRNA binding"/>
    <property type="evidence" value="ECO:0007669"/>
    <property type="project" value="UniProtKB-UniRule"/>
</dbReference>
<dbReference type="GO" id="GO:0003743">
    <property type="term" value="F:translation initiation factor activity"/>
    <property type="evidence" value="ECO:0007669"/>
    <property type="project" value="UniProtKB-UniRule"/>
</dbReference>
<dbReference type="CDD" id="cd04451">
    <property type="entry name" value="S1_IF1"/>
    <property type="match status" value="1"/>
</dbReference>
<dbReference type="FunFam" id="2.40.50.140:FF:000002">
    <property type="entry name" value="Translation initiation factor IF-1"/>
    <property type="match status" value="1"/>
</dbReference>
<dbReference type="Gene3D" id="2.40.50.140">
    <property type="entry name" value="Nucleic acid-binding proteins"/>
    <property type="match status" value="1"/>
</dbReference>
<dbReference type="HAMAP" id="MF_00075">
    <property type="entry name" value="IF_1"/>
    <property type="match status" value="1"/>
</dbReference>
<dbReference type="InterPro" id="IPR012340">
    <property type="entry name" value="NA-bd_OB-fold"/>
</dbReference>
<dbReference type="InterPro" id="IPR006196">
    <property type="entry name" value="RNA-binding_domain_S1_IF1"/>
</dbReference>
<dbReference type="InterPro" id="IPR004368">
    <property type="entry name" value="TIF_IF1"/>
</dbReference>
<dbReference type="NCBIfam" id="TIGR00008">
    <property type="entry name" value="infA"/>
    <property type="match status" value="1"/>
</dbReference>
<dbReference type="PANTHER" id="PTHR33370">
    <property type="entry name" value="TRANSLATION INITIATION FACTOR IF-1, CHLOROPLASTIC"/>
    <property type="match status" value="1"/>
</dbReference>
<dbReference type="PANTHER" id="PTHR33370:SF1">
    <property type="entry name" value="TRANSLATION INITIATION FACTOR IF-1, CHLOROPLASTIC"/>
    <property type="match status" value="1"/>
</dbReference>
<dbReference type="Pfam" id="PF01176">
    <property type="entry name" value="eIF-1a"/>
    <property type="match status" value="1"/>
</dbReference>
<dbReference type="SUPFAM" id="SSF50249">
    <property type="entry name" value="Nucleic acid-binding proteins"/>
    <property type="match status" value="1"/>
</dbReference>
<dbReference type="PROSITE" id="PS50832">
    <property type="entry name" value="S1_IF1_TYPE"/>
    <property type="match status" value="1"/>
</dbReference>
<sequence length="73" mass="8542">MPKKDGAIEIEGRVVEPLPNAMFRVELQNGHRVLAHISGKMRQHYIRILPEDRVVVELSPYDLSRGRIVYRYK</sequence>
<gene>
    <name evidence="1" type="primary">infA</name>
    <name type="ordered locus">Francci3_0605</name>
</gene>
<protein>
    <recommendedName>
        <fullName evidence="1">Translation initiation factor IF-1</fullName>
    </recommendedName>
</protein>
<name>IF1_FRACC</name>
<proteinExistence type="inferred from homology"/>
<reference key="1">
    <citation type="journal article" date="2007" name="Genome Res.">
        <title>Genome characteristics of facultatively symbiotic Frankia sp. strains reflect host range and host plant biogeography.</title>
        <authorList>
            <person name="Normand P."/>
            <person name="Lapierre P."/>
            <person name="Tisa L.S."/>
            <person name="Gogarten J.P."/>
            <person name="Alloisio N."/>
            <person name="Bagnarol E."/>
            <person name="Bassi C.A."/>
            <person name="Berry A.M."/>
            <person name="Bickhart D.M."/>
            <person name="Choisne N."/>
            <person name="Couloux A."/>
            <person name="Cournoyer B."/>
            <person name="Cruveiller S."/>
            <person name="Daubin V."/>
            <person name="Demange N."/>
            <person name="Francino M.P."/>
            <person name="Goltsman E."/>
            <person name="Huang Y."/>
            <person name="Kopp O.R."/>
            <person name="Labarre L."/>
            <person name="Lapidus A."/>
            <person name="Lavire C."/>
            <person name="Marechal J."/>
            <person name="Martinez M."/>
            <person name="Mastronunzio J.E."/>
            <person name="Mullin B.C."/>
            <person name="Niemann J."/>
            <person name="Pujic P."/>
            <person name="Rawnsley T."/>
            <person name="Rouy Z."/>
            <person name="Schenowitz C."/>
            <person name="Sellstedt A."/>
            <person name="Tavares F."/>
            <person name="Tomkins J.P."/>
            <person name="Vallenet D."/>
            <person name="Valverde C."/>
            <person name="Wall L.G."/>
            <person name="Wang Y."/>
            <person name="Medigue C."/>
            <person name="Benson D.R."/>
        </authorList>
    </citation>
    <scope>NUCLEOTIDE SEQUENCE [LARGE SCALE GENOMIC DNA]</scope>
    <source>
        <strain>DSM 45818 / CECT 9043 / HFP020203 / CcI3</strain>
    </source>
</reference>
<evidence type="ECO:0000255" key="1">
    <source>
        <dbReference type="HAMAP-Rule" id="MF_00075"/>
    </source>
</evidence>
<feature type="chain" id="PRO_0000263804" description="Translation initiation factor IF-1">
    <location>
        <begin position="1"/>
        <end position="73"/>
    </location>
</feature>
<feature type="domain" description="S1-like" evidence="1">
    <location>
        <begin position="1"/>
        <end position="73"/>
    </location>
</feature>
<keyword id="KW-0963">Cytoplasm</keyword>
<keyword id="KW-0396">Initiation factor</keyword>
<keyword id="KW-0648">Protein biosynthesis</keyword>
<keyword id="KW-1185">Reference proteome</keyword>
<keyword id="KW-0694">RNA-binding</keyword>
<keyword id="KW-0699">rRNA-binding</keyword>